<sequence>MQILLAALVAYLIGSVSFAVVVSAAMGLADPRSYGSKNPGATNVLRSGNKKAAILTLVGDAFKGWLAVWLARHFGLPDVAVACVAIAVFLGHLYPVFFRFQGGKGVATAAGVLLAVHPVLGLATALTWLIVAFFFRYSSLAALVAAVFAPLFDVFLFGTSHNPVAWAVLAMSVLLVWRHRGNISKLLAGQESRIGDKKKAAADGGAQDGGKL</sequence>
<accession>Q0BCG3</accession>
<keyword id="KW-0997">Cell inner membrane</keyword>
<keyword id="KW-1003">Cell membrane</keyword>
<keyword id="KW-0444">Lipid biosynthesis</keyword>
<keyword id="KW-0443">Lipid metabolism</keyword>
<keyword id="KW-0472">Membrane</keyword>
<keyword id="KW-0594">Phospholipid biosynthesis</keyword>
<keyword id="KW-1208">Phospholipid metabolism</keyword>
<keyword id="KW-0808">Transferase</keyword>
<keyword id="KW-0812">Transmembrane</keyword>
<keyword id="KW-1133">Transmembrane helix</keyword>
<dbReference type="EC" id="2.3.1.275" evidence="1"/>
<dbReference type="EMBL" id="CP000440">
    <property type="protein sequence ID" value="ABI88160.1"/>
    <property type="molecule type" value="Genomic_DNA"/>
</dbReference>
<dbReference type="RefSeq" id="WP_011657750.1">
    <property type="nucleotide sequence ID" value="NC_008390.1"/>
</dbReference>
<dbReference type="SMR" id="Q0BCG3"/>
<dbReference type="GeneID" id="93085193"/>
<dbReference type="KEGG" id="bam:Bamb_2604"/>
<dbReference type="PATRIC" id="fig|339670.21.peg.2297"/>
<dbReference type="eggNOG" id="COG0344">
    <property type="taxonomic scope" value="Bacteria"/>
</dbReference>
<dbReference type="UniPathway" id="UPA00085"/>
<dbReference type="Proteomes" id="UP000000662">
    <property type="component" value="Chromosome 1"/>
</dbReference>
<dbReference type="GO" id="GO:0005886">
    <property type="term" value="C:plasma membrane"/>
    <property type="evidence" value="ECO:0007669"/>
    <property type="project" value="UniProtKB-SubCell"/>
</dbReference>
<dbReference type="GO" id="GO:0043772">
    <property type="term" value="F:acyl-phosphate glycerol-3-phosphate acyltransferase activity"/>
    <property type="evidence" value="ECO:0007669"/>
    <property type="project" value="UniProtKB-UniRule"/>
</dbReference>
<dbReference type="GO" id="GO:0008654">
    <property type="term" value="P:phospholipid biosynthetic process"/>
    <property type="evidence" value="ECO:0007669"/>
    <property type="project" value="UniProtKB-UniRule"/>
</dbReference>
<dbReference type="HAMAP" id="MF_01043">
    <property type="entry name" value="PlsY"/>
    <property type="match status" value="1"/>
</dbReference>
<dbReference type="InterPro" id="IPR003811">
    <property type="entry name" value="G3P_acylTferase_PlsY"/>
</dbReference>
<dbReference type="NCBIfam" id="TIGR00023">
    <property type="entry name" value="glycerol-3-phosphate 1-O-acyltransferase PlsY"/>
    <property type="match status" value="1"/>
</dbReference>
<dbReference type="PANTHER" id="PTHR30309:SF0">
    <property type="entry name" value="GLYCEROL-3-PHOSPHATE ACYLTRANSFERASE-RELATED"/>
    <property type="match status" value="1"/>
</dbReference>
<dbReference type="PANTHER" id="PTHR30309">
    <property type="entry name" value="INNER MEMBRANE PROTEIN YGIH"/>
    <property type="match status" value="1"/>
</dbReference>
<dbReference type="Pfam" id="PF02660">
    <property type="entry name" value="G3P_acyltransf"/>
    <property type="match status" value="1"/>
</dbReference>
<dbReference type="SMART" id="SM01207">
    <property type="entry name" value="G3P_acyltransf"/>
    <property type="match status" value="1"/>
</dbReference>
<feature type="chain" id="PRO_1000064162" description="Glycerol-3-phosphate acyltransferase">
    <location>
        <begin position="1"/>
        <end position="212"/>
    </location>
</feature>
<feature type="transmembrane region" description="Helical" evidence="1">
    <location>
        <begin position="3"/>
        <end position="23"/>
    </location>
</feature>
<feature type="transmembrane region" description="Helical" evidence="1">
    <location>
        <begin position="78"/>
        <end position="98"/>
    </location>
</feature>
<feature type="transmembrane region" description="Helical" evidence="1">
    <location>
        <begin position="115"/>
        <end position="135"/>
    </location>
</feature>
<feature type="transmembrane region" description="Helical" evidence="1">
    <location>
        <begin position="155"/>
        <end position="177"/>
    </location>
</feature>
<reference key="1">
    <citation type="submission" date="2006-08" db="EMBL/GenBank/DDBJ databases">
        <title>Complete sequence of chromosome 1 of Burkholderia cepacia AMMD.</title>
        <authorList>
            <person name="Copeland A."/>
            <person name="Lucas S."/>
            <person name="Lapidus A."/>
            <person name="Barry K."/>
            <person name="Detter J.C."/>
            <person name="Glavina del Rio T."/>
            <person name="Hammon N."/>
            <person name="Israni S."/>
            <person name="Pitluck S."/>
            <person name="Bruce D."/>
            <person name="Chain P."/>
            <person name="Malfatti S."/>
            <person name="Shin M."/>
            <person name="Vergez L."/>
            <person name="Schmutz J."/>
            <person name="Larimer F."/>
            <person name="Land M."/>
            <person name="Hauser L."/>
            <person name="Kyrpides N."/>
            <person name="Kim E."/>
            <person name="Parke J."/>
            <person name="Coenye T."/>
            <person name="Konstantinidis K."/>
            <person name="Ramette A."/>
            <person name="Tiedje J."/>
            <person name="Richardson P."/>
        </authorList>
    </citation>
    <scope>NUCLEOTIDE SEQUENCE [LARGE SCALE GENOMIC DNA]</scope>
    <source>
        <strain>ATCC BAA-244 / DSM 16087 / CCUG 44356 / LMG 19182 / AMMD</strain>
    </source>
</reference>
<comment type="function">
    <text evidence="1">Catalyzes the transfer of an acyl group from acyl-phosphate (acyl-PO(4)) to glycerol-3-phosphate (G3P) to form lysophosphatidic acid (LPA). This enzyme utilizes acyl-phosphate as fatty acyl donor, but not acyl-CoA or acyl-ACP.</text>
</comment>
<comment type="catalytic activity">
    <reaction evidence="1">
        <text>an acyl phosphate + sn-glycerol 3-phosphate = a 1-acyl-sn-glycero-3-phosphate + phosphate</text>
        <dbReference type="Rhea" id="RHEA:34075"/>
        <dbReference type="ChEBI" id="CHEBI:43474"/>
        <dbReference type="ChEBI" id="CHEBI:57597"/>
        <dbReference type="ChEBI" id="CHEBI:57970"/>
        <dbReference type="ChEBI" id="CHEBI:59918"/>
        <dbReference type="EC" id="2.3.1.275"/>
    </reaction>
</comment>
<comment type="pathway">
    <text evidence="1">Lipid metabolism; phospholipid metabolism.</text>
</comment>
<comment type="subunit">
    <text evidence="1">Probably interacts with PlsX.</text>
</comment>
<comment type="subcellular location">
    <subcellularLocation>
        <location evidence="1">Cell inner membrane</location>
        <topology evidence="1">Multi-pass membrane protein</topology>
    </subcellularLocation>
</comment>
<comment type="similarity">
    <text evidence="1">Belongs to the PlsY family.</text>
</comment>
<organism>
    <name type="scientific">Burkholderia ambifaria (strain ATCC BAA-244 / DSM 16087 / CCUG 44356 / LMG 19182 / AMMD)</name>
    <name type="common">Burkholderia cepacia (strain AMMD)</name>
    <dbReference type="NCBI Taxonomy" id="339670"/>
    <lineage>
        <taxon>Bacteria</taxon>
        <taxon>Pseudomonadati</taxon>
        <taxon>Pseudomonadota</taxon>
        <taxon>Betaproteobacteria</taxon>
        <taxon>Burkholderiales</taxon>
        <taxon>Burkholderiaceae</taxon>
        <taxon>Burkholderia</taxon>
        <taxon>Burkholderia cepacia complex</taxon>
    </lineage>
</organism>
<evidence type="ECO:0000255" key="1">
    <source>
        <dbReference type="HAMAP-Rule" id="MF_01043"/>
    </source>
</evidence>
<proteinExistence type="inferred from homology"/>
<protein>
    <recommendedName>
        <fullName evidence="1">Glycerol-3-phosphate acyltransferase</fullName>
    </recommendedName>
    <alternativeName>
        <fullName evidence="1">Acyl-PO4 G3P acyltransferase</fullName>
    </alternativeName>
    <alternativeName>
        <fullName evidence="1">Acyl-phosphate--glycerol-3-phosphate acyltransferase</fullName>
    </alternativeName>
    <alternativeName>
        <fullName evidence="1">G3P acyltransferase</fullName>
        <shortName evidence="1">GPAT</shortName>
        <ecNumber evidence="1">2.3.1.275</ecNumber>
    </alternativeName>
    <alternativeName>
        <fullName evidence="1">Lysophosphatidic acid synthase</fullName>
        <shortName evidence="1">LPA synthase</shortName>
    </alternativeName>
</protein>
<name>PLSY_BURCM</name>
<gene>
    <name evidence="1" type="primary">plsY</name>
    <name type="ordered locus">Bamb_2604</name>
</gene>